<dbReference type="EMBL" id="AL513382">
    <property type="protein sequence ID" value="CAD01198.1"/>
    <property type="molecule type" value="Genomic_DNA"/>
</dbReference>
<dbReference type="EMBL" id="AE014613">
    <property type="protein sequence ID" value="AAO67778.1"/>
    <property type="molecule type" value="Genomic_DNA"/>
</dbReference>
<dbReference type="RefSeq" id="NP_454654.1">
    <property type="nucleotide sequence ID" value="NC_003198.1"/>
</dbReference>
<dbReference type="RefSeq" id="WP_001518655.1">
    <property type="nucleotide sequence ID" value="NZ_WSUR01000014.1"/>
</dbReference>
<dbReference type="SMR" id="P0A2B2"/>
<dbReference type="STRING" id="220341.gene:17584100"/>
<dbReference type="GeneID" id="93310349"/>
<dbReference type="KEGG" id="stt:t0045"/>
<dbReference type="KEGG" id="sty:STY0052"/>
<dbReference type="PATRIC" id="fig|220341.7.peg.52"/>
<dbReference type="eggNOG" id="COG0268">
    <property type="taxonomic scope" value="Bacteria"/>
</dbReference>
<dbReference type="HOGENOM" id="CLU_160655_4_0_6"/>
<dbReference type="OMA" id="GVIHKNA"/>
<dbReference type="OrthoDB" id="9807974at2"/>
<dbReference type="Proteomes" id="UP000000541">
    <property type="component" value="Chromosome"/>
</dbReference>
<dbReference type="Proteomes" id="UP000002670">
    <property type="component" value="Chromosome"/>
</dbReference>
<dbReference type="GO" id="GO:0005829">
    <property type="term" value="C:cytosol"/>
    <property type="evidence" value="ECO:0007669"/>
    <property type="project" value="TreeGrafter"/>
</dbReference>
<dbReference type="GO" id="GO:0015935">
    <property type="term" value="C:small ribosomal subunit"/>
    <property type="evidence" value="ECO:0007669"/>
    <property type="project" value="TreeGrafter"/>
</dbReference>
<dbReference type="GO" id="GO:0070181">
    <property type="term" value="F:small ribosomal subunit rRNA binding"/>
    <property type="evidence" value="ECO:0007669"/>
    <property type="project" value="TreeGrafter"/>
</dbReference>
<dbReference type="GO" id="GO:0003735">
    <property type="term" value="F:structural constituent of ribosome"/>
    <property type="evidence" value="ECO:0007669"/>
    <property type="project" value="InterPro"/>
</dbReference>
<dbReference type="GO" id="GO:0006412">
    <property type="term" value="P:translation"/>
    <property type="evidence" value="ECO:0007669"/>
    <property type="project" value="UniProtKB-UniRule"/>
</dbReference>
<dbReference type="FunFam" id="1.20.58.110:FF:000001">
    <property type="entry name" value="30S ribosomal protein S20"/>
    <property type="match status" value="1"/>
</dbReference>
<dbReference type="Gene3D" id="1.20.58.110">
    <property type="entry name" value="Ribosomal protein S20"/>
    <property type="match status" value="1"/>
</dbReference>
<dbReference type="HAMAP" id="MF_00500">
    <property type="entry name" value="Ribosomal_bS20"/>
    <property type="match status" value="1"/>
</dbReference>
<dbReference type="InterPro" id="IPR002583">
    <property type="entry name" value="Ribosomal_bS20"/>
</dbReference>
<dbReference type="InterPro" id="IPR036510">
    <property type="entry name" value="Ribosomal_bS20_sf"/>
</dbReference>
<dbReference type="NCBIfam" id="TIGR00029">
    <property type="entry name" value="S20"/>
    <property type="match status" value="1"/>
</dbReference>
<dbReference type="PANTHER" id="PTHR33398">
    <property type="entry name" value="30S RIBOSOMAL PROTEIN S20"/>
    <property type="match status" value="1"/>
</dbReference>
<dbReference type="PANTHER" id="PTHR33398:SF1">
    <property type="entry name" value="SMALL RIBOSOMAL SUBUNIT PROTEIN BS20C"/>
    <property type="match status" value="1"/>
</dbReference>
<dbReference type="Pfam" id="PF01649">
    <property type="entry name" value="Ribosomal_S20p"/>
    <property type="match status" value="1"/>
</dbReference>
<dbReference type="SUPFAM" id="SSF46992">
    <property type="entry name" value="Ribosomal protein S20"/>
    <property type="match status" value="1"/>
</dbReference>
<organism>
    <name type="scientific">Salmonella typhi</name>
    <dbReference type="NCBI Taxonomy" id="90370"/>
    <lineage>
        <taxon>Bacteria</taxon>
        <taxon>Pseudomonadati</taxon>
        <taxon>Pseudomonadota</taxon>
        <taxon>Gammaproteobacteria</taxon>
        <taxon>Enterobacterales</taxon>
        <taxon>Enterobacteriaceae</taxon>
        <taxon>Salmonella</taxon>
    </lineage>
</organism>
<comment type="function">
    <text evidence="2">Binds directly to 16S ribosomal RNA.</text>
</comment>
<comment type="similarity">
    <text evidence="2">Belongs to the bacterial ribosomal protein bS20 family.</text>
</comment>
<sequence length="87" mass="9655">MANIKSAKKRAVQSEKARKHNASRRSMMRTFIKKVYAAIEAGDKAAALKAFNEMQPIVDRQAAKGLIHKNKAARHKANLTAQINKLA</sequence>
<reference key="1">
    <citation type="journal article" date="2001" name="Nature">
        <title>Complete genome sequence of a multiple drug resistant Salmonella enterica serovar Typhi CT18.</title>
        <authorList>
            <person name="Parkhill J."/>
            <person name="Dougan G."/>
            <person name="James K.D."/>
            <person name="Thomson N.R."/>
            <person name="Pickard D."/>
            <person name="Wain J."/>
            <person name="Churcher C.M."/>
            <person name="Mungall K.L."/>
            <person name="Bentley S.D."/>
            <person name="Holden M.T.G."/>
            <person name="Sebaihia M."/>
            <person name="Baker S."/>
            <person name="Basham D."/>
            <person name="Brooks K."/>
            <person name="Chillingworth T."/>
            <person name="Connerton P."/>
            <person name="Cronin A."/>
            <person name="Davis P."/>
            <person name="Davies R.M."/>
            <person name="Dowd L."/>
            <person name="White N."/>
            <person name="Farrar J."/>
            <person name="Feltwell T."/>
            <person name="Hamlin N."/>
            <person name="Haque A."/>
            <person name="Hien T.T."/>
            <person name="Holroyd S."/>
            <person name="Jagels K."/>
            <person name="Krogh A."/>
            <person name="Larsen T.S."/>
            <person name="Leather S."/>
            <person name="Moule S."/>
            <person name="O'Gaora P."/>
            <person name="Parry C."/>
            <person name="Quail M.A."/>
            <person name="Rutherford K.M."/>
            <person name="Simmonds M."/>
            <person name="Skelton J."/>
            <person name="Stevens K."/>
            <person name="Whitehead S."/>
            <person name="Barrell B.G."/>
        </authorList>
    </citation>
    <scope>NUCLEOTIDE SEQUENCE [LARGE SCALE GENOMIC DNA]</scope>
    <source>
        <strain>CT18</strain>
    </source>
</reference>
<reference key="2">
    <citation type="journal article" date="2003" name="J. Bacteriol.">
        <title>Comparative genomics of Salmonella enterica serovar Typhi strains Ty2 and CT18.</title>
        <authorList>
            <person name="Deng W."/>
            <person name="Liou S.-R."/>
            <person name="Plunkett G. III"/>
            <person name="Mayhew G.F."/>
            <person name="Rose D.J."/>
            <person name="Burland V."/>
            <person name="Kodoyianni V."/>
            <person name="Schwartz D.C."/>
            <person name="Blattner F.R."/>
        </authorList>
    </citation>
    <scope>NUCLEOTIDE SEQUENCE [LARGE SCALE GENOMIC DNA]</scope>
    <source>
        <strain>ATCC 700931 / Ty2</strain>
    </source>
</reference>
<keyword id="KW-0687">Ribonucleoprotein</keyword>
<keyword id="KW-0689">Ribosomal protein</keyword>
<keyword id="KW-0694">RNA-binding</keyword>
<keyword id="KW-0699">rRNA-binding</keyword>
<feature type="initiator methionine" description="Removed" evidence="1">
    <location>
        <position position="1"/>
    </location>
</feature>
<feature type="chain" id="PRO_0000168026" description="Small ribosomal subunit protein bS20">
    <location>
        <begin position="2"/>
        <end position="87"/>
    </location>
</feature>
<feature type="region of interest" description="Disordered" evidence="3">
    <location>
        <begin position="1"/>
        <end position="26"/>
    </location>
</feature>
<gene>
    <name evidence="2" type="primary">rpsT</name>
    <name type="ordered locus">STY0052</name>
    <name type="ordered locus">t0045</name>
</gene>
<name>RS20_SALTI</name>
<protein>
    <recommendedName>
        <fullName evidence="2">Small ribosomal subunit protein bS20</fullName>
    </recommendedName>
    <alternativeName>
        <fullName evidence="4">30S ribosomal protein S20</fullName>
    </alternativeName>
</protein>
<accession>P0A2B2</accession>
<accession>P41787</accession>
<evidence type="ECO:0000250" key="1"/>
<evidence type="ECO:0000255" key="2">
    <source>
        <dbReference type="HAMAP-Rule" id="MF_00500"/>
    </source>
</evidence>
<evidence type="ECO:0000256" key="3">
    <source>
        <dbReference type="SAM" id="MobiDB-lite"/>
    </source>
</evidence>
<evidence type="ECO:0000305" key="4"/>
<proteinExistence type="inferred from homology"/>